<proteinExistence type="inferred from homology"/>
<accession>Q82NZ3</accession>
<dbReference type="EC" id="3.4.21.92" evidence="1"/>
<dbReference type="EMBL" id="BA000030">
    <property type="protein sequence ID" value="BAC68857.1"/>
    <property type="molecule type" value="Genomic_DNA"/>
</dbReference>
<dbReference type="RefSeq" id="WP_010982585.1">
    <property type="nucleotide sequence ID" value="NZ_JZJK01000078.1"/>
</dbReference>
<dbReference type="SMR" id="Q82NZ3"/>
<dbReference type="MEROPS" id="S14.009"/>
<dbReference type="GeneID" id="41538253"/>
<dbReference type="KEGG" id="sma:SAVERM_1147"/>
<dbReference type="eggNOG" id="COG0740">
    <property type="taxonomic scope" value="Bacteria"/>
</dbReference>
<dbReference type="HOGENOM" id="CLU_058707_3_2_11"/>
<dbReference type="OrthoDB" id="9802800at2"/>
<dbReference type="Proteomes" id="UP000000428">
    <property type="component" value="Chromosome"/>
</dbReference>
<dbReference type="GO" id="GO:0005737">
    <property type="term" value="C:cytoplasm"/>
    <property type="evidence" value="ECO:0007669"/>
    <property type="project" value="UniProtKB-SubCell"/>
</dbReference>
<dbReference type="GO" id="GO:0009368">
    <property type="term" value="C:endopeptidase Clp complex"/>
    <property type="evidence" value="ECO:0007669"/>
    <property type="project" value="TreeGrafter"/>
</dbReference>
<dbReference type="GO" id="GO:0004176">
    <property type="term" value="F:ATP-dependent peptidase activity"/>
    <property type="evidence" value="ECO:0007669"/>
    <property type="project" value="InterPro"/>
</dbReference>
<dbReference type="GO" id="GO:0051117">
    <property type="term" value="F:ATPase binding"/>
    <property type="evidence" value="ECO:0007669"/>
    <property type="project" value="TreeGrafter"/>
</dbReference>
<dbReference type="GO" id="GO:0004252">
    <property type="term" value="F:serine-type endopeptidase activity"/>
    <property type="evidence" value="ECO:0007669"/>
    <property type="project" value="UniProtKB-UniRule"/>
</dbReference>
<dbReference type="GO" id="GO:0006515">
    <property type="term" value="P:protein quality control for misfolded or incompletely synthesized proteins"/>
    <property type="evidence" value="ECO:0007669"/>
    <property type="project" value="TreeGrafter"/>
</dbReference>
<dbReference type="CDD" id="cd07017">
    <property type="entry name" value="S14_ClpP_2"/>
    <property type="match status" value="1"/>
</dbReference>
<dbReference type="FunFam" id="3.90.226.10:FF:000002">
    <property type="entry name" value="ATP-dependent Clp protease proteolytic subunit"/>
    <property type="match status" value="1"/>
</dbReference>
<dbReference type="Gene3D" id="3.90.226.10">
    <property type="entry name" value="2-enoyl-CoA Hydratase, Chain A, domain 1"/>
    <property type="match status" value="1"/>
</dbReference>
<dbReference type="HAMAP" id="MF_00444">
    <property type="entry name" value="ClpP"/>
    <property type="match status" value="1"/>
</dbReference>
<dbReference type="InterPro" id="IPR001907">
    <property type="entry name" value="ClpP"/>
</dbReference>
<dbReference type="InterPro" id="IPR029045">
    <property type="entry name" value="ClpP/crotonase-like_dom_sf"/>
</dbReference>
<dbReference type="InterPro" id="IPR023562">
    <property type="entry name" value="ClpP/TepA"/>
</dbReference>
<dbReference type="NCBIfam" id="NF001368">
    <property type="entry name" value="PRK00277.1"/>
    <property type="match status" value="1"/>
</dbReference>
<dbReference type="NCBIfam" id="NF009205">
    <property type="entry name" value="PRK12553.1"/>
    <property type="match status" value="1"/>
</dbReference>
<dbReference type="PANTHER" id="PTHR10381">
    <property type="entry name" value="ATP-DEPENDENT CLP PROTEASE PROTEOLYTIC SUBUNIT"/>
    <property type="match status" value="1"/>
</dbReference>
<dbReference type="PANTHER" id="PTHR10381:SF26">
    <property type="entry name" value="ATP-DEPENDENT CLP PROTEASE PROTEOLYTIC SUBUNIT-LIKE-RELATED"/>
    <property type="match status" value="1"/>
</dbReference>
<dbReference type="Pfam" id="PF00574">
    <property type="entry name" value="CLP_protease"/>
    <property type="match status" value="1"/>
</dbReference>
<dbReference type="PRINTS" id="PR00127">
    <property type="entry name" value="CLPPROTEASEP"/>
</dbReference>
<dbReference type="SUPFAM" id="SSF52096">
    <property type="entry name" value="ClpP/crotonase"/>
    <property type="match status" value="1"/>
</dbReference>
<organism>
    <name type="scientific">Streptomyces avermitilis (strain ATCC 31267 / DSM 46492 / JCM 5070 / NBRC 14893 / NCIMB 12804 / NRRL 8165 / MA-4680)</name>
    <dbReference type="NCBI Taxonomy" id="227882"/>
    <lineage>
        <taxon>Bacteria</taxon>
        <taxon>Bacillati</taxon>
        <taxon>Actinomycetota</taxon>
        <taxon>Actinomycetes</taxon>
        <taxon>Kitasatosporales</taxon>
        <taxon>Streptomycetaceae</taxon>
        <taxon>Streptomyces</taxon>
    </lineage>
</organism>
<protein>
    <recommendedName>
        <fullName evidence="1">ATP-dependent Clp protease proteolytic subunit 2</fullName>
        <ecNumber evidence="1">3.4.21.92</ecNumber>
    </recommendedName>
    <alternativeName>
        <fullName evidence="1">Endopeptidase Clp 2</fullName>
    </alternativeName>
</protein>
<evidence type="ECO:0000255" key="1">
    <source>
        <dbReference type="HAMAP-Rule" id="MF_00444"/>
    </source>
</evidence>
<evidence type="ECO:0000305" key="2"/>
<sequence length="200" mass="21758">MGSYTIPNVVERTPQGERSYDVFSRLLSERIIFLGTEIDDGVANVVIAQLLHLESANPEHEIAIYINSPGGSFTSLMAIYDTMTFVQAPISTFCVGQAASTAAVLLAGGDPGRRFVLEHARVLLGQPASGGRQGTVSDLSLQAKEMIRIRSQVEEVLSRHTRHDIATLRADMDRDKVFTAQEAVAYGLADEVLSRRLAVV</sequence>
<reference key="1">
    <citation type="journal article" date="2001" name="Proc. Natl. Acad. Sci. U.S.A.">
        <title>Genome sequence of an industrial microorganism Streptomyces avermitilis: deducing the ability of producing secondary metabolites.</title>
        <authorList>
            <person name="Omura S."/>
            <person name="Ikeda H."/>
            <person name="Ishikawa J."/>
            <person name="Hanamoto A."/>
            <person name="Takahashi C."/>
            <person name="Shinose M."/>
            <person name="Takahashi Y."/>
            <person name="Horikawa H."/>
            <person name="Nakazawa H."/>
            <person name="Osonoe T."/>
            <person name="Kikuchi H."/>
            <person name="Shiba T."/>
            <person name="Sakaki Y."/>
            <person name="Hattori M."/>
        </authorList>
    </citation>
    <scope>NUCLEOTIDE SEQUENCE [LARGE SCALE GENOMIC DNA]</scope>
    <source>
        <strain>ATCC 31267 / DSM 46492 / JCM 5070 / NBRC 14893 / NCIMB 12804 / NRRL 8165 / MA-4680</strain>
    </source>
</reference>
<reference key="2">
    <citation type="journal article" date="2003" name="Nat. Biotechnol.">
        <title>Complete genome sequence and comparative analysis of the industrial microorganism Streptomyces avermitilis.</title>
        <authorList>
            <person name="Ikeda H."/>
            <person name="Ishikawa J."/>
            <person name="Hanamoto A."/>
            <person name="Shinose M."/>
            <person name="Kikuchi H."/>
            <person name="Shiba T."/>
            <person name="Sakaki Y."/>
            <person name="Hattori M."/>
            <person name="Omura S."/>
        </authorList>
    </citation>
    <scope>NUCLEOTIDE SEQUENCE [LARGE SCALE GENOMIC DNA]</scope>
    <source>
        <strain>ATCC 31267 / DSM 46492 / JCM 5070 / NBRC 14893 / NCIMB 12804 / NRRL 8165 / MA-4680</strain>
    </source>
</reference>
<comment type="function">
    <text evidence="1">Cleaves peptides in various proteins in a process that requires ATP hydrolysis. Has a chymotrypsin-like activity. Plays a major role in the degradation of misfolded proteins.</text>
</comment>
<comment type="catalytic activity">
    <reaction evidence="1">
        <text>Hydrolysis of proteins to small peptides in the presence of ATP and magnesium. alpha-casein is the usual test substrate. In the absence of ATP, only oligopeptides shorter than five residues are hydrolyzed (such as succinyl-Leu-Tyr-|-NHMec, and Leu-Tyr-Leu-|-Tyr-Trp, in which cleavage of the -Tyr-|-Leu- and -Tyr-|-Trp bonds also occurs).</text>
        <dbReference type="EC" id="3.4.21.92"/>
    </reaction>
</comment>
<comment type="subunit">
    <text evidence="1">Fourteen ClpP subunits assemble into 2 heptameric rings which stack back to back to give a disk-like structure with a central cavity, resembling the structure of eukaryotic proteasomes.</text>
</comment>
<comment type="subcellular location">
    <subcellularLocation>
        <location evidence="1">Cytoplasm</location>
    </subcellularLocation>
</comment>
<comment type="similarity">
    <text evidence="1">Belongs to the peptidase S14 family.</text>
</comment>
<comment type="caution">
    <text evidence="2">Gly-125 is present instead of the conserved His which is expected to be an active site residue.</text>
</comment>
<keyword id="KW-0963">Cytoplasm</keyword>
<keyword id="KW-0378">Hydrolase</keyword>
<keyword id="KW-0645">Protease</keyword>
<keyword id="KW-1185">Reference proteome</keyword>
<keyword id="KW-0720">Serine protease</keyword>
<name>CLPP2_STRAW</name>
<feature type="chain" id="PRO_0000179660" description="ATP-dependent Clp protease proteolytic subunit 2">
    <location>
        <begin position="1"/>
        <end position="200"/>
    </location>
</feature>
<feature type="active site" description="Nucleophile" evidence="1">
    <location>
        <position position="100"/>
    </location>
</feature>
<gene>
    <name evidence="1" type="primary">clpP2</name>
    <name type="ordered locus">SAV_1147</name>
</gene>